<comment type="function">
    <text evidence="1">Catalyzes the conversion of 3-deoxy-D-arabino-heptulosonate 7-phosphate (DAHP) to dehydroquinate (DHQ).</text>
</comment>
<comment type="catalytic activity">
    <reaction evidence="1">
        <text>7-phospho-2-dehydro-3-deoxy-D-arabino-heptonate = 3-dehydroquinate + phosphate</text>
        <dbReference type="Rhea" id="RHEA:21968"/>
        <dbReference type="ChEBI" id="CHEBI:32364"/>
        <dbReference type="ChEBI" id="CHEBI:43474"/>
        <dbReference type="ChEBI" id="CHEBI:58394"/>
        <dbReference type="EC" id="4.2.3.4"/>
    </reaction>
</comment>
<comment type="cofactor">
    <cofactor evidence="1">
        <name>NAD(+)</name>
        <dbReference type="ChEBI" id="CHEBI:57540"/>
    </cofactor>
</comment>
<comment type="cofactor">
    <cofactor evidence="1">
        <name>Co(2+)</name>
        <dbReference type="ChEBI" id="CHEBI:48828"/>
    </cofactor>
    <cofactor evidence="1">
        <name>Zn(2+)</name>
        <dbReference type="ChEBI" id="CHEBI:29105"/>
    </cofactor>
    <text evidence="1">Binds 1 divalent metal cation per subunit. Can use either Co(2+) or Zn(2+).</text>
</comment>
<comment type="pathway">
    <text evidence="1">Metabolic intermediate biosynthesis; chorismate biosynthesis; chorismate from D-erythrose 4-phosphate and phosphoenolpyruvate: step 2/7.</text>
</comment>
<comment type="subcellular location">
    <subcellularLocation>
        <location evidence="1">Cytoplasm</location>
    </subcellularLocation>
</comment>
<comment type="similarity">
    <text evidence="1">Belongs to the sugar phosphate cyclases superfamily. Dehydroquinate synthase family.</text>
</comment>
<proteinExistence type="inferred from homology"/>
<protein>
    <recommendedName>
        <fullName evidence="1">3-dehydroquinate synthase</fullName>
        <shortName evidence="1">DHQS</shortName>
        <ecNumber evidence="1">4.2.3.4</ecNumber>
    </recommendedName>
</protein>
<dbReference type="EC" id="4.2.3.4" evidence="1"/>
<dbReference type="EMBL" id="AE008922">
    <property type="protein sequence ID" value="AAM42114.1"/>
    <property type="molecule type" value="Genomic_DNA"/>
</dbReference>
<dbReference type="RefSeq" id="NP_638190.1">
    <property type="nucleotide sequence ID" value="NC_003902.1"/>
</dbReference>
<dbReference type="RefSeq" id="WP_011037967.1">
    <property type="nucleotide sequence ID" value="NC_003902.1"/>
</dbReference>
<dbReference type="SMR" id="Q8P6X3"/>
<dbReference type="STRING" id="190485.XCC2842"/>
<dbReference type="EnsemblBacteria" id="AAM42114">
    <property type="protein sequence ID" value="AAM42114"/>
    <property type="gene ID" value="XCC2842"/>
</dbReference>
<dbReference type="KEGG" id="xcc:XCC2842"/>
<dbReference type="PATRIC" id="fig|190485.4.peg.3041"/>
<dbReference type="eggNOG" id="COG0337">
    <property type="taxonomic scope" value="Bacteria"/>
</dbReference>
<dbReference type="HOGENOM" id="CLU_001201_0_2_6"/>
<dbReference type="OrthoDB" id="9806583at2"/>
<dbReference type="UniPathway" id="UPA00053">
    <property type="reaction ID" value="UER00085"/>
</dbReference>
<dbReference type="Proteomes" id="UP000001010">
    <property type="component" value="Chromosome"/>
</dbReference>
<dbReference type="GO" id="GO:0005737">
    <property type="term" value="C:cytoplasm"/>
    <property type="evidence" value="ECO:0007669"/>
    <property type="project" value="UniProtKB-SubCell"/>
</dbReference>
<dbReference type="GO" id="GO:0003856">
    <property type="term" value="F:3-dehydroquinate synthase activity"/>
    <property type="evidence" value="ECO:0000318"/>
    <property type="project" value="GO_Central"/>
</dbReference>
<dbReference type="GO" id="GO:0046872">
    <property type="term" value="F:metal ion binding"/>
    <property type="evidence" value="ECO:0007669"/>
    <property type="project" value="UniProtKB-KW"/>
</dbReference>
<dbReference type="GO" id="GO:0000166">
    <property type="term" value="F:nucleotide binding"/>
    <property type="evidence" value="ECO:0007669"/>
    <property type="project" value="UniProtKB-KW"/>
</dbReference>
<dbReference type="GO" id="GO:0008652">
    <property type="term" value="P:amino acid biosynthetic process"/>
    <property type="evidence" value="ECO:0007669"/>
    <property type="project" value="UniProtKB-KW"/>
</dbReference>
<dbReference type="GO" id="GO:0009073">
    <property type="term" value="P:aromatic amino acid family biosynthetic process"/>
    <property type="evidence" value="ECO:0000318"/>
    <property type="project" value="GO_Central"/>
</dbReference>
<dbReference type="GO" id="GO:0009423">
    <property type="term" value="P:chorismate biosynthetic process"/>
    <property type="evidence" value="ECO:0007669"/>
    <property type="project" value="UniProtKB-UniRule"/>
</dbReference>
<dbReference type="CDD" id="cd08195">
    <property type="entry name" value="DHQS"/>
    <property type="match status" value="1"/>
</dbReference>
<dbReference type="FunFam" id="3.40.50.1970:FF:000007">
    <property type="entry name" value="Pentafunctional AROM polypeptide"/>
    <property type="match status" value="1"/>
</dbReference>
<dbReference type="Gene3D" id="3.40.50.1970">
    <property type="match status" value="1"/>
</dbReference>
<dbReference type="Gene3D" id="1.20.1090.10">
    <property type="entry name" value="Dehydroquinate synthase-like - alpha domain"/>
    <property type="match status" value="1"/>
</dbReference>
<dbReference type="HAMAP" id="MF_00110">
    <property type="entry name" value="DHQ_synthase"/>
    <property type="match status" value="1"/>
</dbReference>
<dbReference type="InterPro" id="IPR050071">
    <property type="entry name" value="Dehydroquinate_synthase"/>
</dbReference>
<dbReference type="InterPro" id="IPR016037">
    <property type="entry name" value="DHQ_synth_AroB"/>
</dbReference>
<dbReference type="InterPro" id="IPR030963">
    <property type="entry name" value="DHQ_synth_fam"/>
</dbReference>
<dbReference type="InterPro" id="IPR030960">
    <property type="entry name" value="DHQS/DOIS_N"/>
</dbReference>
<dbReference type="InterPro" id="IPR056179">
    <property type="entry name" value="DHQS_C"/>
</dbReference>
<dbReference type="NCBIfam" id="TIGR01357">
    <property type="entry name" value="aroB"/>
    <property type="match status" value="1"/>
</dbReference>
<dbReference type="PANTHER" id="PTHR43622">
    <property type="entry name" value="3-DEHYDROQUINATE SYNTHASE"/>
    <property type="match status" value="1"/>
</dbReference>
<dbReference type="PANTHER" id="PTHR43622:SF7">
    <property type="entry name" value="3-DEHYDROQUINATE SYNTHASE, CHLOROPLASTIC"/>
    <property type="match status" value="1"/>
</dbReference>
<dbReference type="Pfam" id="PF01761">
    <property type="entry name" value="DHQ_synthase"/>
    <property type="match status" value="1"/>
</dbReference>
<dbReference type="Pfam" id="PF24621">
    <property type="entry name" value="DHQS_C"/>
    <property type="match status" value="1"/>
</dbReference>
<dbReference type="PIRSF" id="PIRSF001455">
    <property type="entry name" value="DHQ_synth"/>
    <property type="match status" value="1"/>
</dbReference>
<dbReference type="SUPFAM" id="SSF56796">
    <property type="entry name" value="Dehydroquinate synthase-like"/>
    <property type="match status" value="1"/>
</dbReference>
<name>AROB_XANCP</name>
<feature type="chain" id="PRO_0000140810" description="3-dehydroquinate synthase">
    <location>
        <begin position="1"/>
        <end position="370"/>
    </location>
</feature>
<feature type="binding site" evidence="1">
    <location>
        <begin position="112"/>
        <end position="116"/>
    </location>
    <ligand>
        <name>NAD(+)</name>
        <dbReference type="ChEBI" id="CHEBI:57540"/>
    </ligand>
</feature>
<feature type="binding site" evidence="1">
    <location>
        <begin position="136"/>
        <end position="137"/>
    </location>
    <ligand>
        <name>NAD(+)</name>
        <dbReference type="ChEBI" id="CHEBI:57540"/>
    </ligand>
</feature>
<feature type="binding site" evidence="1">
    <location>
        <position position="149"/>
    </location>
    <ligand>
        <name>NAD(+)</name>
        <dbReference type="ChEBI" id="CHEBI:57540"/>
    </ligand>
</feature>
<feature type="binding site" evidence="1">
    <location>
        <position position="158"/>
    </location>
    <ligand>
        <name>NAD(+)</name>
        <dbReference type="ChEBI" id="CHEBI:57540"/>
    </ligand>
</feature>
<feature type="binding site" evidence="1">
    <location>
        <begin position="176"/>
        <end position="179"/>
    </location>
    <ligand>
        <name>NAD(+)</name>
        <dbReference type="ChEBI" id="CHEBI:57540"/>
    </ligand>
</feature>
<feature type="binding site" evidence="1">
    <location>
        <position position="191"/>
    </location>
    <ligand>
        <name>Zn(2+)</name>
        <dbReference type="ChEBI" id="CHEBI:29105"/>
    </ligand>
</feature>
<feature type="binding site" evidence="1">
    <location>
        <position position="254"/>
    </location>
    <ligand>
        <name>Zn(2+)</name>
        <dbReference type="ChEBI" id="CHEBI:29105"/>
    </ligand>
</feature>
<feature type="binding site" evidence="1">
    <location>
        <position position="276"/>
    </location>
    <ligand>
        <name>Zn(2+)</name>
        <dbReference type="ChEBI" id="CHEBI:29105"/>
    </ligand>
</feature>
<accession>Q8P6X3</accession>
<organism>
    <name type="scientific">Xanthomonas campestris pv. campestris (strain ATCC 33913 / DSM 3586 / NCPPB 528 / LMG 568 / P 25)</name>
    <dbReference type="NCBI Taxonomy" id="190485"/>
    <lineage>
        <taxon>Bacteria</taxon>
        <taxon>Pseudomonadati</taxon>
        <taxon>Pseudomonadota</taxon>
        <taxon>Gammaproteobacteria</taxon>
        <taxon>Lysobacterales</taxon>
        <taxon>Lysobacteraceae</taxon>
        <taxon>Xanthomonas</taxon>
    </lineage>
</organism>
<evidence type="ECO:0000255" key="1">
    <source>
        <dbReference type="HAMAP-Rule" id="MF_00110"/>
    </source>
</evidence>
<reference key="1">
    <citation type="journal article" date="2002" name="Nature">
        <title>Comparison of the genomes of two Xanthomonas pathogens with differing host specificities.</title>
        <authorList>
            <person name="da Silva A.C.R."/>
            <person name="Ferro J.A."/>
            <person name="Reinach F.C."/>
            <person name="Farah C.S."/>
            <person name="Furlan L.R."/>
            <person name="Quaggio R.B."/>
            <person name="Monteiro-Vitorello C.B."/>
            <person name="Van Sluys M.A."/>
            <person name="Almeida N.F. Jr."/>
            <person name="Alves L.M.C."/>
            <person name="do Amaral A.M."/>
            <person name="Bertolini M.C."/>
            <person name="Camargo L.E.A."/>
            <person name="Camarotte G."/>
            <person name="Cannavan F."/>
            <person name="Cardozo J."/>
            <person name="Chambergo F."/>
            <person name="Ciapina L.P."/>
            <person name="Cicarelli R.M.B."/>
            <person name="Coutinho L.L."/>
            <person name="Cursino-Santos J.R."/>
            <person name="El-Dorry H."/>
            <person name="Faria J.B."/>
            <person name="Ferreira A.J.S."/>
            <person name="Ferreira R.C.C."/>
            <person name="Ferro M.I.T."/>
            <person name="Formighieri E.F."/>
            <person name="Franco M.C."/>
            <person name="Greggio C.C."/>
            <person name="Gruber A."/>
            <person name="Katsuyama A.M."/>
            <person name="Kishi L.T."/>
            <person name="Leite R.P."/>
            <person name="Lemos E.G.M."/>
            <person name="Lemos M.V.F."/>
            <person name="Locali E.C."/>
            <person name="Machado M.A."/>
            <person name="Madeira A.M.B.N."/>
            <person name="Martinez-Rossi N.M."/>
            <person name="Martins E.C."/>
            <person name="Meidanis J."/>
            <person name="Menck C.F.M."/>
            <person name="Miyaki C.Y."/>
            <person name="Moon D.H."/>
            <person name="Moreira L.M."/>
            <person name="Novo M.T.M."/>
            <person name="Okura V.K."/>
            <person name="Oliveira M.C."/>
            <person name="Oliveira V.R."/>
            <person name="Pereira H.A."/>
            <person name="Rossi A."/>
            <person name="Sena J.A.D."/>
            <person name="Silva C."/>
            <person name="de Souza R.F."/>
            <person name="Spinola L.A.F."/>
            <person name="Takita M.A."/>
            <person name="Tamura R.E."/>
            <person name="Teixeira E.C."/>
            <person name="Tezza R.I.D."/>
            <person name="Trindade dos Santos M."/>
            <person name="Truffi D."/>
            <person name="Tsai S.M."/>
            <person name="White F.F."/>
            <person name="Setubal J.C."/>
            <person name="Kitajima J.P."/>
        </authorList>
    </citation>
    <scope>NUCLEOTIDE SEQUENCE [LARGE SCALE GENOMIC DNA]</scope>
    <source>
        <strain>ATCC 33913 / DSM 3586 / NCPPB 528 / LMG 568 / P 25</strain>
    </source>
</reference>
<gene>
    <name evidence="1" type="primary">aroB</name>
    <name type="ordered locus">XCC2842</name>
</gene>
<sequence>MTLPPSLRSVEVDGAQPYTISIAPGLLADGARLARHVRGRHVLLLSDTQVAPHYAAGVRAALLQARPDLQLGELVIAAGEASKTLDNFSLAITALAELGATRDACVFALGGGVVGDLAGFAAACWMRGVDCVQLPTSLLAMVDSSVGGKTAVDIPQGKNLVGAFHPPRAVIADTDTLRTLPTRELRAGLAEVIKYGAIGDPLFFQWLHAERRALLDGDPAALAQAIARSCEHKADIVARDPLEKGERALLNLGHTFGHAIETEQGYGAPGNDNLNHGEAVAVGMVLAARLSAALGMADAQDTEALRTLLHEFGLPTQIPTGLAPEALLGRMRLDKKNIAGRLRLVLWRGIGKAEVVPDVDEAAVLEILAD</sequence>
<keyword id="KW-0028">Amino-acid biosynthesis</keyword>
<keyword id="KW-0057">Aromatic amino acid biosynthesis</keyword>
<keyword id="KW-0170">Cobalt</keyword>
<keyword id="KW-0963">Cytoplasm</keyword>
<keyword id="KW-0456">Lyase</keyword>
<keyword id="KW-0479">Metal-binding</keyword>
<keyword id="KW-0520">NAD</keyword>
<keyword id="KW-0547">Nucleotide-binding</keyword>
<keyword id="KW-1185">Reference proteome</keyword>
<keyword id="KW-0862">Zinc</keyword>